<proteinExistence type="inferred from homology"/>
<sequence>MIIADNIKQFHSIRNSLIKQQKIGFVPTMGALHNGHISLIKKAKSENDVVIVSIFVNPTQFNNPNDYQTYPNQLQQDIQILASLDVDVLFNPSEKDIYPDGNLLRIEPKLEIANILEGKSRPGHFSGTLTVVLKLLQITKPNNLYLGEKDYQQVMLIKQLVKDFFINTKIIVCPTQRQPSGLPLSSRNKNLTSTDIEIANKIYEILRQDDFSNLEELTNKINSTGAKLQYIQKLNNRIFLAFYIGKVRLIDNFLKETGPSC</sequence>
<reference key="1">
    <citation type="submission" date="2006-03" db="EMBL/GenBank/DDBJ databases">
        <title>Complete genome sequence of Francisella tularensis LVS (Live Vaccine Strain).</title>
        <authorList>
            <person name="Chain P."/>
            <person name="Larimer F."/>
            <person name="Land M."/>
            <person name="Stilwagen S."/>
            <person name="Larsson P."/>
            <person name="Bearden S."/>
            <person name="Chu M."/>
            <person name="Oyston P."/>
            <person name="Forsman M."/>
            <person name="Andersson S."/>
            <person name="Lindler L."/>
            <person name="Titball R."/>
            <person name="Garcia E."/>
        </authorList>
    </citation>
    <scope>NUCLEOTIDE SEQUENCE [LARGE SCALE GENOMIC DNA]</scope>
    <source>
        <strain>LVS</strain>
    </source>
</reference>
<evidence type="ECO:0000255" key="1">
    <source>
        <dbReference type="HAMAP-Rule" id="MF_00158"/>
    </source>
</evidence>
<comment type="function">
    <text evidence="1">Catalyzes the condensation of pantoate with beta-alanine in an ATP-dependent reaction via a pantoyl-adenylate intermediate.</text>
</comment>
<comment type="catalytic activity">
    <reaction evidence="1">
        <text>(R)-pantoate + beta-alanine + ATP = (R)-pantothenate + AMP + diphosphate + H(+)</text>
        <dbReference type="Rhea" id="RHEA:10912"/>
        <dbReference type="ChEBI" id="CHEBI:15378"/>
        <dbReference type="ChEBI" id="CHEBI:15980"/>
        <dbReference type="ChEBI" id="CHEBI:29032"/>
        <dbReference type="ChEBI" id="CHEBI:30616"/>
        <dbReference type="ChEBI" id="CHEBI:33019"/>
        <dbReference type="ChEBI" id="CHEBI:57966"/>
        <dbReference type="ChEBI" id="CHEBI:456215"/>
        <dbReference type="EC" id="6.3.2.1"/>
    </reaction>
</comment>
<comment type="pathway">
    <text evidence="1">Cofactor biosynthesis; (R)-pantothenate biosynthesis; (R)-pantothenate from (R)-pantoate and beta-alanine: step 1/1.</text>
</comment>
<comment type="subunit">
    <text evidence="1">Homodimer.</text>
</comment>
<comment type="subcellular location">
    <subcellularLocation>
        <location evidence="1">Cytoplasm</location>
    </subcellularLocation>
</comment>
<comment type="miscellaneous">
    <text evidence="1">The reaction proceeds by a bi uni uni bi ping pong mechanism.</text>
</comment>
<comment type="similarity">
    <text evidence="1">Belongs to the pantothenate synthetase family.</text>
</comment>
<dbReference type="EC" id="6.3.2.1" evidence="1"/>
<dbReference type="EMBL" id="AM233362">
    <property type="protein sequence ID" value="CAJ79112.1"/>
    <property type="molecule type" value="Genomic_DNA"/>
</dbReference>
<dbReference type="RefSeq" id="WP_003018203.1">
    <property type="nucleotide sequence ID" value="NZ_CP009694.1"/>
</dbReference>
<dbReference type="SMR" id="Q2A4C7"/>
<dbReference type="KEGG" id="ftl:FTL_0673"/>
<dbReference type="UniPathway" id="UPA00028">
    <property type="reaction ID" value="UER00005"/>
</dbReference>
<dbReference type="Proteomes" id="UP000001944">
    <property type="component" value="Chromosome"/>
</dbReference>
<dbReference type="GO" id="GO:0005829">
    <property type="term" value="C:cytosol"/>
    <property type="evidence" value="ECO:0007669"/>
    <property type="project" value="TreeGrafter"/>
</dbReference>
<dbReference type="GO" id="GO:0005524">
    <property type="term" value="F:ATP binding"/>
    <property type="evidence" value="ECO:0007669"/>
    <property type="project" value="UniProtKB-KW"/>
</dbReference>
<dbReference type="GO" id="GO:0004592">
    <property type="term" value="F:pantoate-beta-alanine ligase activity"/>
    <property type="evidence" value="ECO:0007669"/>
    <property type="project" value="UniProtKB-UniRule"/>
</dbReference>
<dbReference type="GO" id="GO:0015940">
    <property type="term" value="P:pantothenate biosynthetic process"/>
    <property type="evidence" value="ECO:0007669"/>
    <property type="project" value="UniProtKB-UniRule"/>
</dbReference>
<dbReference type="Gene3D" id="3.40.50.620">
    <property type="entry name" value="HUPs"/>
    <property type="match status" value="1"/>
</dbReference>
<dbReference type="Gene3D" id="3.30.1300.10">
    <property type="entry name" value="Pantoate-beta-alanine ligase, C-terminal domain"/>
    <property type="match status" value="1"/>
</dbReference>
<dbReference type="HAMAP" id="MF_00158">
    <property type="entry name" value="PanC"/>
    <property type="match status" value="1"/>
</dbReference>
<dbReference type="InterPro" id="IPR004821">
    <property type="entry name" value="Cyt_trans-like"/>
</dbReference>
<dbReference type="InterPro" id="IPR003721">
    <property type="entry name" value="Pantoate_ligase"/>
</dbReference>
<dbReference type="InterPro" id="IPR042176">
    <property type="entry name" value="Pantoate_ligase_C"/>
</dbReference>
<dbReference type="InterPro" id="IPR014729">
    <property type="entry name" value="Rossmann-like_a/b/a_fold"/>
</dbReference>
<dbReference type="NCBIfam" id="TIGR00125">
    <property type="entry name" value="cyt_tran_rel"/>
    <property type="match status" value="1"/>
</dbReference>
<dbReference type="NCBIfam" id="TIGR00018">
    <property type="entry name" value="panC"/>
    <property type="match status" value="1"/>
</dbReference>
<dbReference type="PANTHER" id="PTHR21299">
    <property type="entry name" value="CYTIDYLATE KINASE/PANTOATE-BETA-ALANINE LIGASE"/>
    <property type="match status" value="1"/>
</dbReference>
<dbReference type="PANTHER" id="PTHR21299:SF1">
    <property type="entry name" value="PANTOATE--BETA-ALANINE LIGASE"/>
    <property type="match status" value="1"/>
</dbReference>
<dbReference type="Pfam" id="PF02569">
    <property type="entry name" value="Pantoate_ligase"/>
    <property type="match status" value="1"/>
</dbReference>
<dbReference type="SUPFAM" id="SSF52374">
    <property type="entry name" value="Nucleotidylyl transferase"/>
    <property type="match status" value="1"/>
</dbReference>
<accession>Q2A4C7</accession>
<protein>
    <recommendedName>
        <fullName evidence="1">Pantothenate synthetase</fullName>
        <shortName evidence="1">PS</shortName>
        <ecNumber evidence="1">6.3.2.1</ecNumber>
    </recommendedName>
    <alternativeName>
        <fullName evidence="1">Pantoate--beta-alanine ligase</fullName>
    </alternativeName>
    <alternativeName>
        <fullName evidence="1">Pantoate-activating enzyme</fullName>
    </alternativeName>
</protein>
<gene>
    <name evidence="1" type="primary">panC</name>
    <name type="ordered locus">FTL_0673</name>
</gene>
<keyword id="KW-0067">ATP-binding</keyword>
<keyword id="KW-0963">Cytoplasm</keyword>
<keyword id="KW-0436">Ligase</keyword>
<keyword id="KW-0547">Nucleotide-binding</keyword>
<keyword id="KW-0566">Pantothenate biosynthesis</keyword>
<keyword id="KW-1185">Reference proteome</keyword>
<name>PANC_FRATH</name>
<feature type="chain" id="PRO_0000305447" description="Pantothenate synthetase">
    <location>
        <begin position="1"/>
        <end position="261"/>
    </location>
</feature>
<feature type="active site" description="Proton donor" evidence="1">
    <location>
        <position position="36"/>
    </location>
</feature>
<feature type="binding site" evidence="1">
    <location>
        <begin position="29"/>
        <end position="36"/>
    </location>
    <ligand>
        <name>ATP</name>
        <dbReference type="ChEBI" id="CHEBI:30616"/>
    </ligand>
</feature>
<feature type="binding site" evidence="1">
    <location>
        <position position="60"/>
    </location>
    <ligand>
        <name>(R)-pantoate</name>
        <dbReference type="ChEBI" id="CHEBI:15980"/>
    </ligand>
</feature>
<feature type="binding site" evidence="1">
    <location>
        <position position="60"/>
    </location>
    <ligand>
        <name>beta-alanine</name>
        <dbReference type="ChEBI" id="CHEBI:57966"/>
    </ligand>
</feature>
<feature type="binding site" evidence="1">
    <location>
        <begin position="147"/>
        <end position="150"/>
    </location>
    <ligand>
        <name>ATP</name>
        <dbReference type="ChEBI" id="CHEBI:30616"/>
    </ligand>
</feature>
<feature type="binding site" evidence="1">
    <location>
        <position position="153"/>
    </location>
    <ligand>
        <name>(R)-pantoate</name>
        <dbReference type="ChEBI" id="CHEBI:15980"/>
    </ligand>
</feature>
<feature type="binding site" evidence="1">
    <location>
        <begin position="184"/>
        <end position="187"/>
    </location>
    <ligand>
        <name>ATP</name>
        <dbReference type="ChEBI" id="CHEBI:30616"/>
    </ligand>
</feature>
<organism>
    <name type="scientific">Francisella tularensis subsp. holarctica (strain LVS)</name>
    <dbReference type="NCBI Taxonomy" id="376619"/>
    <lineage>
        <taxon>Bacteria</taxon>
        <taxon>Pseudomonadati</taxon>
        <taxon>Pseudomonadota</taxon>
        <taxon>Gammaproteobacteria</taxon>
        <taxon>Thiotrichales</taxon>
        <taxon>Francisellaceae</taxon>
        <taxon>Francisella</taxon>
    </lineage>
</organism>